<dbReference type="EMBL" id="U69963">
    <property type="protein sequence ID" value="AAB08432.1"/>
    <property type="status" value="ALT_FRAME"/>
    <property type="molecule type" value="mRNA"/>
</dbReference>
<dbReference type="RefSeq" id="NP_001003247.1">
    <property type="nucleotide sequence ID" value="NM_001003247.1"/>
</dbReference>
<dbReference type="SMR" id="Q95167"/>
<dbReference type="FunCoup" id="Q95167">
    <property type="interactions" value="5"/>
</dbReference>
<dbReference type="STRING" id="9615.ENSCAFP00000053736"/>
<dbReference type="GlyCosmos" id="Q95167">
    <property type="glycosylation" value="1 site, No reported glycans"/>
</dbReference>
<dbReference type="PaxDb" id="9612-ENSCAFP00000032916"/>
<dbReference type="eggNOG" id="KOG3713">
    <property type="taxonomic scope" value="Eukaryota"/>
</dbReference>
<dbReference type="InParanoid" id="Q95167"/>
<dbReference type="OrthoDB" id="296522at2759"/>
<dbReference type="Proteomes" id="UP000002254">
    <property type="component" value="Unplaced"/>
</dbReference>
<dbReference type="Proteomes" id="UP000694429">
    <property type="component" value="Unplaced"/>
</dbReference>
<dbReference type="Proteomes" id="UP000694542">
    <property type="component" value="Unplaced"/>
</dbReference>
<dbReference type="Proteomes" id="UP000805418">
    <property type="component" value="Unplaced"/>
</dbReference>
<dbReference type="GO" id="GO:0030425">
    <property type="term" value="C:dendrite"/>
    <property type="evidence" value="ECO:0000250"/>
    <property type="project" value="UniProtKB"/>
</dbReference>
<dbReference type="GO" id="GO:0016020">
    <property type="term" value="C:membrane"/>
    <property type="evidence" value="ECO:0000318"/>
    <property type="project" value="GO_Central"/>
</dbReference>
<dbReference type="GO" id="GO:0043025">
    <property type="term" value="C:neuronal cell body"/>
    <property type="evidence" value="ECO:0000318"/>
    <property type="project" value="GO_Central"/>
</dbReference>
<dbReference type="GO" id="GO:0032809">
    <property type="term" value="C:neuronal cell body membrane"/>
    <property type="evidence" value="ECO:0000250"/>
    <property type="project" value="UniProtKB"/>
</dbReference>
<dbReference type="GO" id="GO:0043204">
    <property type="term" value="C:perikaryon"/>
    <property type="evidence" value="ECO:0007669"/>
    <property type="project" value="UniProtKB-SubCell"/>
</dbReference>
<dbReference type="GO" id="GO:0005886">
    <property type="term" value="C:plasma membrane"/>
    <property type="evidence" value="ECO:0000250"/>
    <property type="project" value="UniProtKB"/>
</dbReference>
<dbReference type="GO" id="GO:0008076">
    <property type="term" value="C:voltage-gated potassium channel complex"/>
    <property type="evidence" value="ECO:0000250"/>
    <property type="project" value="UniProtKB"/>
</dbReference>
<dbReference type="GO" id="GO:0005251">
    <property type="term" value="F:delayed rectifier potassium channel activity"/>
    <property type="evidence" value="ECO:0000314"/>
    <property type="project" value="UniProtKB"/>
</dbReference>
<dbReference type="GO" id="GO:0015459">
    <property type="term" value="F:potassium channel regulator activity"/>
    <property type="evidence" value="ECO:0000318"/>
    <property type="project" value="GO_Central"/>
</dbReference>
<dbReference type="GO" id="GO:0046982">
    <property type="term" value="F:protein heterodimerization activity"/>
    <property type="evidence" value="ECO:0000250"/>
    <property type="project" value="UniProtKB"/>
</dbReference>
<dbReference type="GO" id="GO:0001508">
    <property type="term" value="P:action potential"/>
    <property type="evidence" value="ECO:0000318"/>
    <property type="project" value="GO_Central"/>
</dbReference>
<dbReference type="GO" id="GO:0071805">
    <property type="term" value="P:potassium ion transmembrane transport"/>
    <property type="evidence" value="ECO:0000250"/>
    <property type="project" value="UniProtKB"/>
</dbReference>
<dbReference type="GO" id="GO:0006813">
    <property type="term" value="P:potassium ion transport"/>
    <property type="evidence" value="ECO:0000250"/>
    <property type="project" value="UniProtKB"/>
</dbReference>
<dbReference type="GO" id="GO:0051260">
    <property type="term" value="P:protein homooligomerization"/>
    <property type="evidence" value="ECO:0007669"/>
    <property type="project" value="InterPro"/>
</dbReference>
<dbReference type="GO" id="GO:0072659">
    <property type="term" value="P:protein localization to plasma membrane"/>
    <property type="evidence" value="ECO:0000250"/>
    <property type="project" value="UniProtKB"/>
</dbReference>
<dbReference type="CDD" id="cd18412">
    <property type="entry name" value="BTB_POZ_KCNB2"/>
    <property type="match status" value="1"/>
</dbReference>
<dbReference type="FunFam" id="1.10.287.70:FF:000034">
    <property type="entry name" value="Potassium voltage-gated channel subfamily B member"/>
    <property type="match status" value="1"/>
</dbReference>
<dbReference type="FunFam" id="1.20.120.350:FF:000018">
    <property type="entry name" value="Potassium voltage-gated channel subfamily B member"/>
    <property type="match status" value="1"/>
</dbReference>
<dbReference type="FunFam" id="3.30.710.10:FF:000010">
    <property type="entry name" value="Potassium voltage-gated channel subfamily B member"/>
    <property type="match status" value="1"/>
</dbReference>
<dbReference type="Gene3D" id="1.10.287.70">
    <property type="match status" value="1"/>
</dbReference>
<dbReference type="Gene3D" id="3.30.710.10">
    <property type="entry name" value="Potassium Channel Kv1.1, Chain A"/>
    <property type="match status" value="1"/>
</dbReference>
<dbReference type="Gene3D" id="1.20.120.350">
    <property type="entry name" value="Voltage-gated potassium channels. Chain C"/>
    <property type="match status" value="1"/>
</dbReference>
<dbReference type="InterPro" id="IPR000210">
    <property type="entry name" value="BTB/POZ_dom"/>
</dbReference>
<dbReference type="InterPro" id="IPR005821">
    <property type="entry name" value="Ion_trans_dom"/>
</dbReference>
<dbReference type="InterPro" id="IPR003968">
    <property type="entry name" value="K_chnl_volt-dep_Kv"/>
</dbReference>
<dbReference type="InterPro" id="IPR003973">
    <property type="entry name" value="K_chnl_volt-dep_Kv2"/>
</dbReference>
<dbReference type="InterPro" id="IPR005826">
    <property type="entry name" value="K_chnl_volt-dep_Kv2.2"/>
</dbReference>
<dbReference type="InterPro" id="IPR011333">
    <property type="entry name" value="SKP1/BTB/POZ_sf"/>
</dbReference>
<dbReference type="InterPro" id="IPR003131">
    <property type="entry name" value="T1-type_BTB"/>
</dbReference>
<dbReference type="InterPro" id="IPR028325">
    <property type="entry name" value="VG_K_chnl"/>
</dbReference>
<dbReference type="InterPro" id="IPR027359">
    <property type="entry name" value="Volt_channel_dom_sf"/>
</dbReference>
<dbReference type="PANTHER" id="PTHR11537:SF134">
    <property type="entry name" value="POTASSIUM VOLTAGE-GATED CHANNEL SUBFAMILY B MEMBER 2"/>
    <property type="match status" value="1"/>
</dbReference>
<dbReference type="PANTHER" id="PTHR11537">
    <property type="entry name" value="VOLTAGE-GATED POTASSIUM CHANNEL"/>
    <property type="match status" value="1"/>
</dbReference>
<dbReference type="Pfam" id="PF02214">
    <property type="entry name" value="BTB_2"/>
    <property type="match status" value="1"/>
</dbReference>
<dbReference type="Pfam" id="PF00520">
    <property type="entry name" value="Ion_trans"/>
    <property type="match status" value="1"/>
</dbReference>
<dbReference type="Pfam" id="PF03521">
    <property type="entry name" value="Kv2channel"/>
    <property type="match status" value="1"/>
</dbReference>
<dbReference type="PRINTS" id="PR00169">
    <property type="entry name" value="KCHANNEL"/>
</dbReference>
<dbReference type="PRINTS" id="PR01515">
    <property type="entry name" value="KV22CHANNEL"/>
</dbReference>
<dbReference type="PRINTS" id="PR01491">
    <property type="entry name" value="KVCHANNEL"/>
</dbReference>
<dbReference type="PRINTS" id="PR01495">
    <property type="entry name" value="SHABCHANNEL"/>
</dbReference>
<dbReference type="SMART" id="SM00225">
    <property type="entry name" value="BTB"/>
    <property type="match status" value="1"/>
</dbReference>
<dbReference type="SUPFAM" id="SSF54695">
    <property type="entry name" value="POZ domain"/>
    <property type="match status" value="1"/>
</dbReference>
<dbReference type="SUPFAM" id="SSF81324">
    <property type="entry name" value="Voltage-gated potassium channels"/>
    <property type="match status" value="1"/>
</dbReference>
<protein>
    <recommendedName>
        <fullName evidence="4">Potassium voltage-gated channel subfamily B member 2</fullName>
    </recommendedName>
    <alternativeName>
        <fullName>Voltage-gated potassium channel subunit Kv2.2</fullName>
    </alternativeName>
</protein>
<gene>
    <name evidence="4" type="primary">KCNB2</name>
</gene>
<proteinExistence type="evidence at protein level"/>
<feature type="chain" id="PRO_0000054047" description="Potassium voltage-gated channel subfamily B member 2">
    <location>
        <begin position="1"/>
        <end position="809" status="greater than"/>
    </location>
</feature>
<feature type="topological domain" description="Cytoplasmic" evidence="2">
    <location>
        <begin position="1"/>
        <end position="190"/>
    </location>
</feature>
<feature type="transmembrane region" description="Helical; Name=Segment S1" evidence="2">
    <location>
        <begin position="191"/>
        <end position="212"/>
    </location>
</feature>
<feature type="topological domain" description="Extracellular" evidence="2">
    <location>
        <begin position="213"/>
        <end position="232"/>
    </location>
</feature>
<feature type="transmembrane region" description="Helical; Name=Segment S2" evidence="2">
    <location>
        <begin position="233"/>
        <end position="254"/>
    </location>
</feature>
<feature type="topological domain" description="Cytoplasmic" evidence="2">
    <location>
        <begin position="255"/>
        <end position="265"/>
    </location>
</feature>
<feature type="transmembrane region" description="Helical; Name=Segment S3" evidence="2">
    <location>
        <begin position="266"/>
        <end position="284"/>
    </location>
</feature>
<feature type="topological domain" description="Extracellular" evidence="2">
    <location>
        <begin position="285"/>
        <end position="296"/>
    </location>
</feature>
<feature type="transmembrane region" description="Helical; Voltage-sensor; Name=Segment S4" evidence="2">
    <location>
        <begin position="297"/>
        <end position="317"/>
    </location>
</feature>
<feature type="topological domain" description="Cytoplasmic" evidence="2">
    <location>
        <begin position="318"/>
        <end position="332"/>
    </location>
</feature>
<feature type="transmembrane region" description="Helical; Name=Segment S5" evidence="2">
    <location>
        <begin position="333"/>
        <end position="354"/>
    </location>
</feature>
<feature type="topological domain" description="Extracellular" evidence="2">
    <location>
        <begin position="355"/>
        <end position="368"/>
    </location>
</feature>
<feature type="intramembrane region" description="Helical; Name=Pore helix" evidence="2">
    <location>
        <begin position="369"/>
        <end position="380"/>
    </location>
</feature>
<feature type="intramembrane region" evidence="2">
    <location>
        <begin position="381"/>
        <end position="388"/>
    </location>
</feature>
<feature type="topological domain" description="Extracellular" evidence="2">
    <location>
        <begin position="389"/>
        <end position="395"/>
    </location>
</feature>
<feature type="transmembrane region" description="Helical; Name=Segment S6" evidence="2">
    <location>
        <begin position="396"/>
        <end position="424"/>
    </location>
</feature>
<feature type="topological domain" description="Cytoplasmic" evidence="2">
    <location>
        <begin position="425"/>
        <end position="809"/>
    </location>
</feature>
<feature type="region of interest" description="Disordered" evidence="6">
    <location>
        <begin position="1"/>
        <end position="22"/>
    </location>
</feature>
<feature type="region of interest" description="Disordered" evidence="6">
    <location>
        <begin position="503"/>
        <end position="534"/>
    </location>
</feature>
<feature type="region of interest" description="Disordered" evidence="6">
    <location>
        <begin position="549"/>
        <end position="571"/>
    </location>
</feature>
<feature type="region of interest" description="Disordered" evidence="6">
    <location>
        <begin position="681"/>
        <end position="742"/>
    </location>
</feature>
<feature type="region of interest" description="Disordered" evidence="6">
    <location>
        <begin position="757"/>
        <end position="809"/>
    </location>
</feature>
<feature type="short sequence motif" description="Selectivity filter" evidence="2">
    <location>
        <begin position="381"/>
        <end position="386"/>
    </location>
</feature>
<feature type="short sequence motif" description="FFAT" evidence="4">
    <location>
        <begin position="605"/>
        <end position="611"/>
    </location>
</feature>
<feature type="compositionally biased region" description="Basic and acidic residues" evidence="6">
    <location>
        <begin position="508"/>
        <end position="522"/>
    </location>
</feature>
<feature type="compositionally biased region" description="Polar residues" evidence="6">
    <location>
        <begin position="523"/>
        <end position="534"/>
    </location>
</feature>
<feature type="compositionally biased region" description="Polar residues" evidence="6">
    <location>
        <begin position="694"/>
        <end position="711"/>
    </location>
</feature>
<feature type="compositionally biased region" description="Basic and acidic residues" evidence="6">
    <location>
        <begin position="798"/>
        <end position="809"/>
    </location>
</feature>
<feature type="modified residue" description="Phosphoserine" evidence="3">
    <location>
        <position position="448"/>
    </location>
</feature>
<feature type="modified residue" description="Phosphoserine" evidence="4">
    <location>
        <position position="608"/>
    </location>
</feature>
<feature type="glycosylation site" description="N-linked (GlcNAc...) asparagine" evidence="5">
    <location>
        <position position="287"/>
    </location>
</feature>
<feature type="non-terminal residue">
    <location>
        <position position="809"/>
    </location>
</feature>
<keyword id="KW-1003">Cell membrane</keyword>
<keyword id="KW-0966">Cell projection</keyword>
<keyword id="KW-0325">Glycoprotein</keyword>
<keyword id="KW-0407">Ion channel</keyword>
<keyword id="KW-0406">Ion transport</keyword>
<keyword id="KW-0472">Membrane</keyword>
<keyword id="KW-0597">Phosphoprotein</keyword>
<keyword id="KW-0630">Potassium</keyword>
<keyword id="KW-0631">Potassium channel</keyword>
<keyword id="KW-0633">Potassium transport</keyword>
<keyword id="KW-1185">Reference proteome</keyword>
<keyword id="KW-0812">Transmembrane</keyword>
<keyword id="KW-1133">Transmembrane helix</keyword>
<keyword id="KW-0813">Transport</keyword>
<keyword id="KW-0851">Voltage-gated channel</keyword>
<sequence length="809" mass="90602">MAEKAPPGLNRKTSRSTLSLPPEPVDIIRSKTCSRRVKINVGGLNHEVLWRTPDRLPRTRLGKLRDCNTHESLLEVCDDYNLGHNEYFFDRHPGAFTSILNFYRTGKLHMMEEMCALSVGQELDYWGIDEIYLESCCQARYHQKKEQMNEELRREAETMRDGEGEEFDNTCCPEKRKKSRDLLEKPNSSVAAKILAIVSNLFIVLSTIALSLNTLPELQEMDEFGQPNDNPQLAHVEAVCNAWFTMEYLLRFLSSPNKWKFFKGPLNVIDLLAILPYYVTIFLTESNKSVLQFQNVRRVVQIFRIMRILRILKLARHSTGLQSLGFTLRRSYNELGLLILFLAMGIMIFSSLVFFAEKDADATKFTSIPASFWWATITMTTVGYGDIYPKTLLGKSVGGLCCIAGVLVIALPIPIIVPPFSEFYKEQKRQEKAIKRREALERAKRNGSIVSMNLKDAFARSMELIDVAVEKAGESSSTKDSADDNHLSPSRWKWARKALSETSSNKSYENKYQEVSQKDSHEQLNNTSSSSPQHLSAQKLEMLYNEITKTQPHPAPNPDGQEQPDRPSAYEEEIEMEEVVCPQEQLAVAQGEVIVDMKSTSSIDSFTSCATDFTETERSPLPPLSASHLQMRFPPDLAGTDEHQRARGPPFLMLARGKGPAGRDAILEYAPVDITVSLDASGSKVGSHGPLQPDSASESPKSSLKGSNPLKSRSLRVNFKENRGSAPQTPPSTARPLPVTTADFSLTAPQLISTILLEETPSQGDRPLLGAEGSAHCQGPSKGLSPRFPKQKLFPFSSRERRSFTEIDT</sequence>
<accession>Q95167</accession>
<comment type="function">
    <text evidence="1 3 7">Voltage-gated potassium channel that mediates transmembrane potassium transport in excitable membranes, primarily in the brain and smooth muscle cells (PubMed:9612272). Channels open or close in response to the voltage difference across the membrane, letting potassium ions pass in accordance with their electrochemical gradient. Homotetrameric channels mediate a delayed-rectifier voltage-dependent outward potassium current that display rapid activation and slow inactivation in response to membrane depolarization (PubMed:9612272). Can form functional homotetrameric and heterotetrameric channels that contain variable proportions of KCNB1; channel properties depend on the type of alpha subunits that are part of the channel. Can also form functional heterotetrameric channels with other alpha subunits that are non-conducting when expressed alone, such as KCNS1 and KCNS2, creating a functionally diverse range of channel complexes. In vivo, membranes probably contain a mixture of heteromeric potassium channel complexes, making it difficult to assign currents observed in intact tissues to any particular potassium channel family member. Contributes to the delayed-rectifier voltage-gated potassium current in cortical pyramidal neurons and smooth muscle cells (By similarity).</text>
</comment>
<comment type="catalytic activity">
    <reaction evidence="7">
        <text>K(+)(in) = K(+)(out)</text>
        <dbReference type="Rhea" id="RHEA:29463"/>
        <dbReference type="ChEBI" id="CHEBI:29103"/>
    </reaction>
</comment>
<comment type="activity regulation">
    <text evidence="3 7 9">Inhibited by quinine at micromolar levels (PubMed:9612272). Modestly sensitive to millimolar levels of tetraethylammonium (TEA) and 4-aminopyridine (4-AP) (PubMed:9612272).</text>
</comment>
<comment type="biophysicochemical properties">
    <kinetics>
        <text evidence="7 9">Homotetrameric channels expressed in xenopus oocytes or in mammalian non-neuronal cells display delayed-rectifier voltage-dependent potassium currents which are activated during membrane depolarization, i.e within a risetime of about 20 msec. After that, inactivate very slowly (PubMed:9612272). Their activation requires low threshold potentials of about -20 to -30 mV, with a midpoint activation at about 10 mV. For inactivation, the voltage at half-maximal amplitude is about -30 mV. Channels have an unitary conductance of about 14 pS (PubMed:9612272). The voltage-dependence of activation and inactivation and other channel characteristics vary depending on the experimental conditions, the expression system and post-translational modifications.</text>
    </kinetics>
</comment>
<comment type="subunit">
    <text evidence="3 4">Homotetramer or heterotetramer with KCNB1. Heterotetramer with KCNS1 and KCNS2 (By similarity). Interacts (via phosphorylated FFAT motif) with VAPA and VAPB (By similarity).</text>
</comment>
<comment type="subcellular location">
    <subcellularLocation>
        <location evidence="7">Cell membrane</location>
        <topology evidence="3">Multi-pass membrane protein</topology>
    </subcellularLocation>
    <subcellularLocation>
        <location evidence="3">Perikaryon</location>
    </subcellularLocation>
    <subcellularLocation>
        <location evidence="3">Cell projection</location>
        <location evidence="3">Dendrite</location>
    </subcellularLocation>
    <text evidence="3">Localized uniformly throughout cell bodies and dendrites. Colocalizes with KCNB1 to high-density somatodendritic clusters on cortical pyramidal neurons.</text>
</comment>
<comment type="tissue specificity">
    <text evidence="7">Expressed in smooth muscle cells (PubMed:9612272).</text>
</comment>
<comment type="domain">
    <text evidence="2">The transmembrane segment S4 functions as a voltage-sensor and is characterized by a series of positively charged amino acids at every third position. Channel opening and closing is effected by a conformation change that affects the position and orientation of the voltage-sensor paddle formed by S3 and S4 within the membrane. A transmembrane electric field that is positive inside would push the positively charged S4 segment outwards, thereby opening the pore, while a field that is negative inside would pull the S4 segment inwards and close the pore. Changes in the position and orientation of S4 are then transmitted to the activation gate formed by the inner helix bundle via the S4-S5 linker region.</text>
</comment>
<comment type="PTM">
    <text evidence="3 4">Phosphorylated (By similarity). Phosphorylation at Ser-608 of the FFAT motif activates interaction with MOSPD2, VAPA and VAPB (By similarity).</text>
</comment>
<comment type="similarity">
    <text evidence="8">Belongs to the potassium channel family. B (Shab) (TC 1.A.1.2) subfamily. Kv2.2/KCNB2 sub-subfamily.</text>
</comment>
<comment type="sequence caution" evidence="8">
    <conflict type="frameshift">
        <sequence resource="EMBL-CDS" id="AAB08432"/>
    </conflict>
</comment>
<evidence type="ECO:0000250" key="1">
    <source>
        <dbReference type="UniProtKB" id="A6H8H5"/>
    </source>
</evidence>
<evidence type="ECO:0000250" key="2">
    <source>
        <dbReference type="UniProtKB" id="P63142"/>
    </source>
</evidence>
<evidence type="ECO:0000250" key="3">
    <source>
        <dbReference type="UniProtKB" id="Q63099"/>
    </source>
</evidence>
<evidence type="ECO:0000250" key="4">
    <source>
        <dbReference type="UniProtKB" id="Q92953"/>
    </source>
</evidence>
<evidence type="ECO:0000255" key="5"/>
<evidence type="ECO:0000256" key="6">
    <source>
        <dbReference type="SAM" id="MobiDB-lite"/>
    </source>
</evidence>
<evidence type="ECO:0000269" key="7">
    <source>
    </source>
</evidence>
<evidence type="ECO:0000305" key="8"/>
<evidence type="ECO:0000305" key="9">
    <source>
    </source>
</evidence>
<name>KCNB2_CANLF</name>
<reference key="1">
    <citation type="journal article" date="1998" name="Am. J. Physiol.">
        <title>Molecular identification of a component of delayed rectifier current in gastrointestinal smooth muscles.</title>
        <authorList>
            <person name="Schmalz F."/>
            <person name="Kinsella J."/>
            <person name="Koh S.D."/>
            <person name="Vogalis F."/>
            <person name="Schneider A."/>
            <person name="Flynn E.R."/>
            <person name="Kenyon J.L."/>
            <person name="Horowitz B."/>
        </authorList>
    </citation>
    <scope>NUCLEOTIDE SEQUENCE [MRNA]</scope>
    <scope>FUNCTION</scope>
    <scope>TRANSPORTER ACTIVITY</scope>
    <scope>BIOPHYSICOCHEMICAL PROPERTIES</scope>
    <scope>ACTIVITY REGULATION</scope>
    <scope>SUBCELLULAR LOCATION</scope>
    <scope>TISSUE SPECIFICITY</scope>
</reference>
<reference key="2">
    <citation type="journal article" date="1999" name="Ann. N. Y. Acad. Sci.">
        <title>Molecular diversity of K+ channels.</title>
        <authorList>
            <person name="Coetzee W.A."/>
            <person name="Amarillo Y."/>
            <person name="Chiu J."/>
            <person name="Chow A."/>
            <person name="Lau D."/>
            <person name="McCormack T."/>
            <person name="Moreno H."/>
            <person name="Nadal M.S."/>
            <person name="Ozaita A."/>
            <person name="Pountney D."/>
            <person name="Saganich M."/>
            <person name="Vega-Saenz de Miera E."/>
            <person name="Rudy B."/>
        </authorList>
    </citation>
    <scope>REVIEW</scope>
</reference>
<organism>
    <name type="scientific">Canis lupus familiaris</name>
    <name type="common">Dog</name>
    <name type="synonym">Canis familiaris</name>
    <dbReference type="NCBI Taxonomy" id="9615"/>
    <lineage>
        <taxon>Eukaryota</taxon>
        <taxon>Metazoa</taxon>
        <taxon>Chordata</taxon>
        <taxon>Craniata</taxon>
        <taxon>Vertebrata</taxon>
        <taxon>Euteleostomi</taxon>
        <taxon>Mammalia</taxon>
        <taxon>Eutheria</taxon>
        <taxon>Laurasiatheria</taxon>
        <taxon>Carnivora</taxon>
        <taxon>Caniformia</taxon>
        <taxon>Canidae</taxon>
        <taxon>Canis</taxon>
    </lineage>
</organism>